<proteinExistence type="inferred from homology"/>
<accession>B2KBB9</accession>
<reference key="1">
    <citation type="journal article" date="2009" name="Appl. Environ. Microbiol.">
        <title>Genomic analysis of 'Elusimicrobium minutum,' the first cultivated representative of the phylum 'Elusimicrobia' (formerly termite group 1).</title>
        <authorList>
            <person name="Herlemann D.P.R."/>
            <person name="Geissinger O."/>
            <person name="Ikeda-Ohtsubo W."/>
            <person name="Kunin V."/>
            <person name="Sun H."/>
            <person name="Lapidus A."/>
            <person name="Hugenholtz P."/>
            <person name="Brune A."/>
        </authorList>
    </citation>
    <scope>NUCLEOTIDE SEQUENCE [LARGE SCALE GENOMIC DNA]</scope>
    <source>
        <strain>Pei191</strain>
    </source>
</reference>
<name>SYDND_ELUMP</name>
<dbReference type="EC" id="6.1.1.23" evidence="1"/>
<dbReference type="EMBL" id="CP001055">
    <property type="protein sequence ID" value="ACC97941.1"/>
    <property type="molecule type" value="Genomic_DNA"/>
</dbReference>
<dbReference type="RefSeq" id="WP_012414556.1">
    <property type="nucleotide sequence ID" value="NC_010644.1"/>
</dbReference>
<dbReference type="SMR" id="B2KBB9"/>
<dbReference type="STRING" id="445932.Emin_0384"/>
<dbReference type="KEGG" id="emi:Emin_0384"/>
<dbReference type="HOGENOM" id="CLU_014330_3_2_0"/>
<dbReference type="OrthoDB" id="9802326at2"/>
<dbReference type="Proteomes" id="UP000001029">
    <property type="component" value="Chromosome"/>
</dbReference>
<dbReference type="GO" id="GO:0005737">
    <property type="term" value="C:cytoplasm"/>
    <property type="evidence" value="ECO:0007669"/>
    <property type="project" value="UniProtKB-SubCell"/>
</dbReference>
<dbReference type="GO" id="GO:0004815">
    <property type="term" value="F:aspartate-tRNA ligase activity"/>
    <property type="evidence" value="ECO:0007669"/>
    <property type="project" value="UniProtKB-UniRule"/>
</dbReference>
<dbReference type="GO" id="GO:0050560">
    <property type="term" value="F:aspartate-tRNA(Asn) ligase activity"/>
    <property type="evidence" value="ECO:0007669"/>
    <property type="project" value="UniProtKB-EC"/>
</dbReference>
<dbReference type="GO" id="GO:0005524">
    <property type="term" value="F:ATP binding"/>
    <property type="evidence" value="ECO:0007669"/>
    <property type="project" value="UniProtKB-UniRule"/>
</dbReference>
<dbReference type="GO" id="GO:0003676">
    <property type="term" value="F:nucleic acid binding"/>
    <property type="evidence" value="ECO:0007669"/>
    <property type="project" value="InterPro"/>
</dbReference>
<dbReference type="GO" id="GO:0006422">
    <property type="term" value="P:aspartyl-tRNA aminoacylation"/>
    <property type="evidence" value="ECO:0007669"/>
    <property type="project" value="UniProtKB-UniRule"/>
</dbReference>
<dbReference type="CDD" id="cd00777">
    <property type="entry name" value="AspRS_core"/>
    <property type="match status" value="1"/>
</dbReference>
<dbReference type="CDD" id="cd04317">
    <property type="entry name" value="EcAspRS_like_N"/>
    <property type="match status" value="1"/>
</dbReference>
<dbReference type="Gene3D" id="3.30.930.10">
    <property type="entry name" value="Bira Bifunctional Protein, Domain 2"/>
    <property type="match status" value="1"/>
</dbReference>
<dbReference type="Gene3D" id="3.30.1360.30">
    <property type="entry name" value="GAD-like domain"/>
    <property type="match status" value="1"/>
</dbReference>
<dbReference type="Gene3D" id="2.40.50.140">
    <property type="entry name" value="Nucleic acid-binding proteins"/>
    <property type="match status" value="1"/>
</dbReference>
<dbReference type="HAMAP" id="MF_00044">
    <property type="entry name" value="Asp_tRNA_synth_type1"/>
    <property type="match status" value="1"/>
</dbReference>
<dbReference type="InterPro" id="IPR004364">
    <property type="entry name" value="Aa-tRNA-synt_II"/>
</dbReference>
<dbReference type="InterPro" id="IPR006195">
    <property type="entry name" value="aa-tRNA-synth_II"/>
</dbReference>
<dbReference type="InterPro" id="IPR045864">
    <property type="entry name" value="aa-tRNA-synth_II/BPL/LPL"/>
</dbReference>
<dbReference type="InterPro" id="IPR004524">
    <property type="entry name" value="Asp-tRNA-ligase_1"/>
</dbReference>
<dbReference type="InterPro" id="IPR047089">
    <property type="entry name" value="Asp-tRNA-ligase_1_N"/>
</dbReference>
<dbReference type="InterPro" id="IPR002312">
    <property type="entry name" value="Asp/Asn-tRNA-synth_IIb"/>
</dbReference>
<dbReference type="InterPro" id="IPR047090">
    <property type="entry name" value="AspRS_core"/>
</dbReference>
<dbReference type="InterPro" id="IPR004115">
    <property type="entry name" value="GAD-like_sf"/>
</dbReference>
<dbReference type="InterPro" id="IPR029351">
    <property type="entry name" value="GAD_dom"/>
</dbReference>
<dbReference type="InterPro" id="IPR012340">
    <property type="entry name" value="NA-bd_OB-fold"/>
</dbReference>
<dbReference type="InterPro" id="IPR004365">
    <property type="entry name" value="NA-bd_OB_tRNA"/>
</dbReference>
<dbReference type="NCBIfam" id="TIGR00459">
    <property type="entry name" value="aspS_bact"/>
    <property type="match status" value="1"/>
</dbReference>
<dbReference type="NCBIfam" id="NF001750">
    <property type="entry name" value="PRK00476.1"/>
    <property type="match status" value="1"/>
</dbReference>
<dbReference type="PANTHER" id="PTHR22594:SF5">
    <property type="entry name" value="ASPARTATE--TRNA LIGASE, MITOCHONDRIAL"/>
    <property type="match status" value="1"/>
</dbReference>
<dbReference type="PANTHER" id="PTHR22594">
    <property type="entry name" value="ASPARTYL/LYSYL-TRNA SYNTHETASE"/>
    <property type="match status" value="1"/>
</dbReference>
<dbReference type="Pfam" id="PF02938">
    <property type="entry name" value="GAD"/>
    <property type="match status" value="1"/>
</dbReference>
<dbReference type="Pfam" id="PF00152">
    <property type="entry name" value="tRNA-synt_2"/>
    <property type="match status" value="1"/>
</dbReference>
<dbReference type="Pfam" id="PF01336">
    <property type="entry name" value="tRNA_anti-codon"/>
    <property type="match status" value="1"/>
</dbReference>
<dbReference type="PRINTS" id="PR01042">
    <property type="entry name" value="TRNASYNTHASP"/>
</dbReference>
<dbReference type="SUPFAM" id="SSF55681">
    <property type="entry name" value="Class II aaRS and biotin synthetases"/>
    <property type="match status" value="1"/>
</dbReference>
<dbReference type="SUPFAM" id="SSF55261">
    <property type="entry name" value="GAD domain-like"/>
    <property type="match status" value="1"/>
</dbReference>
<dbReference type="SUPFAM" id="SSF50249">
    <property type="entry name" value="Nucleic acid-binding proteins"/>
    <property type="match status" value="1"/>
</dbReference>
<dbReference type="PROSITE" id="PS50862">
    <property type="entry name" value="AA_TRNA_LIGASE_II"/>
    <property type="match status" value="1"/>
</dbReference>
<protein>
    <recommendedName>
        <fullName evidence="1">Aspartate--tRNA(Asp/Asn) ligase</fullName>
        <ecNumber evidence="1">6.1.1.23</ecNumber>
    </recommendedName>
    <alternativeName>
        <fullName evidence="1">Aspartyl-tRNA synthetase</fullName>
        <shortName evidence="1">AspRS</shortName>
    </alternativeName>
    <alternativeName>
        <fullName evidence="1">Non-discriminating aspartyl-tRNA synthetase</fullName>
        <shortName evidence="1">ND-AspRS</shortName>
    </alternativeName>
</protein>
<organism>
    <name type="scientific">Elusimicrobium minutum (strain Pei191)</name>
    <dbReference type="NCBI Taxonomy" id="445932"/>
    <lineage>
        <taxon>Bacteria</taxon>
        <taxon>Pseudomonadati</taxon>
        <taxon>Elusimicrobiota</taxon>
        <taxon>Elusimicrobia</taxon>
        <taxon>Elusimicrobiales</taxon>
        <taxon>Elusimicrobiaceae</taxon>
        <taxon>Elusimicrobium</taxon>
    </lineage>
</organism>
<gene>
    <name evidence="1" type="primary">aspS</name>
    <name type="ordered locus">Emin_0384</name>
</gene>
<feature type="chain" id="PRO_1000090993" description="Aspartate--tRNA(Asp/Asn) ligase">
    <location>
        <begin position="1"/>
        <end position="583"/>
    </location>
</feature>
<feature type="region of interest" description="Aspartate" evidence="1">
    <location>
        <begin position="197"/>
        <end position="200"/>
    </location>
</feature>
<feature type="binding site" evidence="1">
    <location>
        <position position="173"/>
    </location>
    <ligand>
        <name>L-aspartate</name>
        <dbReference type="ChEBI" id="CHEBI:29991"/>
    </ligand>
</feature>
<feature type="binding site" evidence="1">
    <location>
        <begin position="219"/>
        <end position="221"/>
    </location>
    <ligand>
        <name>ATP</name>
        <dbReference type="ChEBI" id="CHEBI:30616"/>
    </ligand>
</feature>
<feature type="binding site" evidence="1">
    <location>
        <position position="219"/>
    </location>
    <ligand>
        <name>L-aspartate</name>
        <dbReference type="ChEBI" id="CHEBI:29991"/>
    </ligand>
</feature>
<feature type="binding site" evidence="1">
    <location>
        <position position="228"/>
    </location>
    <ligand>
        <name>ATP</name>
        <dbReference type="ChEBI" id="CHEBI:30616"/>
    </ligand>
</feature>
<feature type="binding site" evidence="1">
    <location>
        <position position="447"/>
    </location>
    <ligand>
        <name>L-aspartate</name>
        <dbReference type="ChEBI" id="CHEBI:29991"/>
    </ligand>
</feature>
<feature type="binding site" evidence="1">
    <location>
        <position position="481"/>
    </location>
    <ligand>
        <name>ATP</name>
        <dbReference type="ChEBI" id="CHEBI:30616"/>
    </ligand>
</feature>
<feature type="binding site" evidence="1">
    <location>
        <position position="488"/>
    </location>
    <ligand>
        <name>L-aspartate</name>
        <dbReference type="ChEBI" id="CHEBI:29991"/>
    </ligand>
</feature>
<feature type="binding site" evidence="1">
    <location>
        <begin position="533"/>
        <end position="536"/>
    </location>
    <ligand>
        <name>ATP</name>
        <dbReference type="ChEBI" id="CHEBI:30616"/>
    </ligand>
</feature>
<feature type="site" description="Important for tRNA non-discrimination" evidence="1">
    <location>
        <position position="31"/>
    </location>
</feature>
<comment type="function">
    <text evidence="1">Aspartyl-tRNA synthetase with relaxed tRNA specificity since it is able to aspartylate not only its cognate tRNA(Asp) but also tRNA(Asn). Reaction proceeds in two steps: L-aspartate is first activated by ATP to form Asp-AMP and then transferred to the acceptor end of tRNA(Asp/Asn).</text>
</comment>
<comment type="catalytic activity">
    <reaction evidence="1">
        <text>tRNA(Asx) + L-aspartate + ATP = L-aspartyl-tRNA(Asx) + AMP + diphosphate</text>
        <dbReference type="Rhea" id="RHEA:18349"/>
        <dbReference type="Rhea" id="RHEA-COMP:9710"/>
        <dbReference type="Rhea" id="RHEA-COMP:9711"/>
        <dbReference type="ChEBI" id="CHEBI:29991"/>
        <dbReference type="ChEBI" id="CHEBI:30616"/>
        <dbReference type="ChEBI" id="CHEBI:33019"/>
        <dbReference type="ChEBI" id="CHEBI:78442"/>
        <dbReference type="ChEBI" id="CHEBI:78516"/>
        <dbReference type="ChEBI" id="CHEBI:456215"/>
        <dbReference type="EC" id="6.1.1.23"/>
    </reaction>
</comment>
<comment type="subunit">
    <text evidence="1">Homodimer.</text>
</comment>
<comment type="subcellular location">
    <subcellularLocation>
        <location evidence="1">Cytoplasm</location>
    </subcellularLocation>
</comment>
<comment type="similarity">
    <text evidence="1">Belongs to the class-II aminoacyl-tRNA synthetase family. Type 1 subfamily.</text>
</comment>
<keyword id="KW-0030">Aminoacyl-tRNA synthetase</keyword>
<keyword id="KW-0067">ATP-binding</keyword>
<keyword id="KW-0963">Cytoplasm</keyword>
<keyword id="KW-0436">Ligase</keyword>
<keyword id="KW-0547">Nucleotide-binding</keyword>
<keyword id="KW-0648">Protein biosynthesis</keyword>
<keyword id="KW-1185">Reference proteome</keyword>
<sequence>MMRTNYCGDINKNYVNSVQVLCGWVNSYRDHGGVLFLDLRDRTGKVQVVVEPTNKDFELASTARTEYVLKVTGLVRLRQTEHINPNNPTGEIEVVAQEVEILNTSIQLPFEPDNSRQINEETRLKYRYIDLRNPVMLHNLTTRHKVAQAARRYFSDNGFIEIETPILTRSTPEGARDYLVPSRVHEGKFYALPQSPQMFKQTLMASGVDRYFQIARAFRDEDLRSDRQPEHTQIDIEMSFVTLADVFAAGEGMIAEVFKAAGEDAPAAPFEQMEYADVMAKYGSDKPDIRYEIDITDIGGIFTNSNFKVVSDALANGGVVRAIKAKYGAKHINRSTCDKLTDLAKASGAKGLVWLKYSDDKFEGPSAKFFTEEELASLQHTLSVEKDDMVFIGADKEKVVSPVMGAIRKELIKLLCLKPNKKWAFLWVKHFPLLEFVPEENRWDAAHNPFTAPLEKDIPLLDTDPGKVKSYQFDLVLNGVELASGSIRNHRRDLQEKILNLMKHSPEQAALRFGMLLNALEAGAPPHGGFGMGLDRLAALLCKEESIREVIAFPKTATAYCPLTESPNVVEDIQLKELHIKIK</sequence>
<evidence type="ECO:0000255" key="1">
    <source>
        <dbReference type="HAMAP-Rule" id="MF_00044"/>
    </source>
</evidence>